<keyword id="KW-0002">3D-structure</keyword>
<keyword id="KW-0521">NADP</keyword>
<keyword id="KW-0560">Oxidoreductase</keyword>
<keyword id="KW-1185">Reference proteome</keyword>
<name>PAAA_ECOLI</name>
<comment type="function">
    <text evidence="2 3 5 6">Component of 1,2-phenylacetyl-CoA epoxidase multicomponent enzyme system which catalyzes the reduction of phenylacetyl-CoA (PA-CoA) to form 1,2-epoxyphenylacetyl-CoA. The subunit A is the catalytic subunit involved in the incorporation of one atom of molecular oxygen into phenylacetyl-CoA.</text>
</comment>
<comment type="catalytic activity">
    <reaction evidence="3">
        <text>phenylacetyl-CoA + NADPH + O2 + H(+) = 2-(1,2-epoxy-1,2-dihydrophenyl)acetyl-CoA + NADP(+) + H2O</text>
        <dbReference type="Rhea" id="RHEA:32171"/>
        <dbReference type="ChEBI" id="CHEBI:15377"/>
        <dbReference type="ChEBI" id="CHEBI:15378"/>
        <dbReference type="ChEBI" id="CHEBI:15379"/>
        <dbReference type="ChEBI" id="CHEBI:57390"/>
        <dbReference type="ChEBI" id="CHEBI:57783"/>
        <dbReference type="ChEBI" id="CHEBI:58349"/>
        <dbReference type="ChEBI" id="CHEBI:63458"/>
        <dbReference type="EC" id="1.14.13.149"/>
    </reaction>
</comment>
<comment type="cofactor">
    <cofactor evidence="7">
        <name>Fe cation</name>
        <dbReference type="ChEBI" id="CHEBI:24875"/>
    </cofactor>
</comment>
<comment type="pathway">
    <text>Aromatic compound metabolism; phenylacetate degradation.</text>
</comment>
<comment type="subunit">
    <text evidence="4 5">Forms a stable heterotetramer (dimer of heterodimers) with PaaC.</text>
</comment>
<comment type="interaction">
    <interactant intactId="EBI-1119536">
        <id>P76077</id>
    </interactant>
    <interactant intactId="EBI-1131666">
        <id>P76079</id>
        <label>paaC</label>
    </interactant>
    <organismsDiffer>false</organismsDiffer>
    <experiments>6</experiments>
</comment>
<comment type="induction">
    <text evidence="1 6">Activated by cAMP receptor protein (CRP), integration host factor (IHF) and by phenylacetyl-coenzyme A (PA-CoA) that prevents PaaX from binding its target sequences. Inhibited by PaaX.</text>
</comment>
<comment type="sequence caution" evidence="7">
    <conflict type="erroneous initiation">
        <sequence resource="EMBL-CDS" id="CAA66090"/>
    </conflict>
    <text>Truncated N-terminus.</text>
</comment>
<evidence type="ECO:0000269" key="1">
    <source>
    </source>
</evidence>
<evidence type="ECO:0000269" key="2">
    <source>
    </source>
</evidence>
<evidence type="ECO:0000269" key="3">
    <source>
    </source>
</evidence>
<evidence type="ECO:0000269" key="4">
    <source>
    </source>
</evidence>
<evidence type="ECO:0000269" key="5">
    <source>
    </source>
</evidence>
<evidence type="ECO:0000269" key="6">
    <source>
    </source>
</evidence>
<evidence type="ECO:0000305" key="7"/>
<evidence type="ECO:0007829" key="8">
    <source>
        <dbReference type="PDB" id="3PVT"/>
    </source>
</evidence>
<evidence type="ECO:0007829" key="9">
    <source>
        <dbReference type="PDB" id="3PWQ"/>
    </source>
</evidence>
<proteinExistence type="evidence at protein level"/>
<sequence length="309" mass="35499">MTQEERFEQRIAQETAIEPQDWMPDAYRKTLIRQIGQHAHSEIVGMLPEGNWITRAPTLRRKAILLAKVQDEAGHGLYLYSAAETLGCAREDIYQKMLDGRMKYSSIFNYPTLSWADIGVIGWLVDGAAIVNQVALCRTSYGPYARAMVKICKEESFHQRQGFEACMALAQGSEAQKQMLQDAINRFWWPALMMFGPNDDNSPNSARSLTWKIKRFTNDELRQRFVDNTVPQVEMLGMTVPDPDLHFDTESGHYRFGEIDWQEFNEVINGRGICNQERLDAKRKAWEEGTWVREAALAHAQKQHARKVA</sequence>
<feature type="chain" id="PRO_0000058159" description="1,2-phenylacetyl-CoA epoxidase, subunit A">
    <location>
        <begin position="1"/>
        <end position="309"/>
    </location>
</feature>
<feature type="binding site" evidence="5">
    <location>
        <position position="33"/>
    </location>
    <ligand>
        <name>substrate</name>
    </ligand>
</feature>
<feature type="binding site" evidence="5">
    <location>
        <position position="37"/>
    </location>
    <ligand>
        <name>substrate</name>
    </ligand>
</feature>
<feature type="binding site" evidence="5">
    <location>
        <begin position="103"/>
        <end position="106"/>
    </location>
    <ligand>
        <name>substrate</name>
    </ligand>
</feature>
<feature type="binding site" evidence="5">
    <location>
        <position position="132"/>
    </location>
    <ligand>
        <name>substrate</name>
    </ligand>
</feature>
<feature type="binding site" evidence="5">
    <location>
        <position position="193"/>
    </location>
    <ligand>
        <name>substrate</name>
    </ligand>
</feature>
<feature type="binding site" evidence="5">
    <location>
        <begin position="202"/>
        <end position="204"/>
    </location>
    <ligand>
        <name>substrate</name>
    </ligand>
</feature>
<feature type="binding site" evidence="5">
    <location>
        <position position="214"/>
    </location>
    <ligand>
        <name>substrate</name>
    </ligand>
</feature>
<feature type="binding site" evidence="5">
    <location>
        <position position="218"/>
    </location>
    <ligand>
        <name>substrate</name>
    </ligand>
</feature>
<feature type="sequence variant" description="In strain: W.">
    <original>T</original>
    <variation>A</variation>
    <location>
        <position position="210"/>
    </location>
</feature>
<feature type="helix" evidence="8">
    <location>
        <begin position="2"/>
        <end position="12"/>
    </location>
</feature>
<feature type="helix" evidence="8">
    <location>
        <begin position="25"/>
        <end position="44"/>
    </location>
</feature>
<feature type="helix" evidence="8">
    <location>
        <begin position="46"/>
        <end position="50"/>
    </location>
</feature>
<feature type="helix" evidence="8">
    <location>
        <begin position="51"/>
        <end position="55"/>
    </location>
</feature>
<feature type="helix" evidence="8">
    <location>
        <begin position="59"/>
        <end position="84"/>
    </location>
</feature>
<feature type="turn" evidence="8">
    <location>
        <begin position="85"/>
        <end position="87"/>
    </location>
</feature>
<feature type="helix" evidence="8">
    <location>
        <begin position="90"/>
        <end position="98"/>
    </location>
</feature>
<feature type="helix" evidence="8">
    <location>
        <begin position="106"/>
        <end position="109"/>
    </location>
</feature>
<feature type="helix" evidence="8">
    <location>
        <begin position="115"/>
        <end position="134"/>
    </location>
</feature>
<feature type="turn" evidence="8">
    <location>
        <begin position="135"/>
        <end position="138"/>
    </location>
</feature>
<feature type="helix" evidence="8">
    <location>
        <begin position="142"/>
        <end position="170"/>
    </location>
</feature>
<feature type="helix" evidence="8">
    <location>
        <begin position="174"/>
        <end position="193"/>
    </location>
</feature>
<feature type="helix" evidence="8">
    <location>
        <begin position="199"/>
        <end position="201"/>
    </location>
</feature>
<feature type="helix" evidence="8">
    <location>
        <begin position="205"/>
        <end position="210"/>
    </location>
</feature>
<feature type="helix" evidence="8">
    <location>
        <begin position="218"/>
        <end position="235"/>
    </location>
</feature>
<feature type="strand" evidence="8">
    <location>
        <begin position="246"/>
        <end position="248"/>
    </location>
</feature>
<feature type="turn" evidence="8">
    <location>
        <begin position="249"/>
        <end position="252"/>
    </location>
</feature>
<feature type="strand" evidence="8">
    <location>
        <begin position="253"/>
        <end position="255"/>
    </location>
</feature>
<feature type="helix" evidence="8">
    <location>
        <begin position="261"/>
        <end position="268"/>
    </location>
</feature>
<feature type="turn" evidence="9">
    <location>
        <begin position="269"/>
        <end position="271"/>
    </location>
</feature>
<feature type="strand" evidence="8">
    <location>
        <begin position="272"/>
        <end position="274"/>
    </location>
</feature>
<feature type="helix" evidence="8">
    <location>
        <begin position="275"/>
        <end position="288"/>
    </location>
</feature>
<feature type="helix" evidence="8">
    <location>
        <begin position="290"/>
        <end position="301"/>
    </location>
</feature>
<accession>P76077</accession>
<accession>O53010</accession>
<accession>Q2MBD3</accession>
<gene>
    <name type="primary">paaA</name>
    <name type="synonym">ydbO</name>
    <name type="ordered locus">b1388</name>
    <name type="ordered locus">JW1383</name>
</gene>
<organism>
    <name type="scientific">Escherichia coli (strain K12)</name>
    <dbReference type="NCBI Taxonomy" id="83333"/>
    <lineage>
        <taxon>Bacteria</taxon>
        <taxon>Pseudomonadati</taxon>
        <taxon>Pseudomonadota</taxon>
        <taxon>Gammaproteobacteria</taxon>
        <taxon>Enterobacterales</taxon>
        <taxon>Enterobacteriaceae</taxon>
        <taxon>Escherichia</taxon>
    </lineage>
</organism>
<protein>
    <recommendedName>
        <fullName>1,2-phenylacetyl-CoA epoxidase, subunit A</fullName>
        <ecNumber>1.14.13.149</ecNumber>
    </recommendedName>
    <alternativeName>
        <fullName>1,2-phenylacetyl-CoA epoxidase, catalytic subunit alpha</fullName>
    </alternativeName>
    <alternativeName>
        <fullName>1,2-phenylacetyl-CoA monooxygenase, subunit A</fullName>
    </alternativeName>
</protein>
<dbReference type="EC" id="1.14.13.149"/>
<dbReference type="EMBL" id="X97452">
    <property type="protein sequence ID" value="CAA66090.1"/>
    <property type="status" value="ALT_INIT"/>
    <property type="molecule type" value="Genomic_DNA"/>
</dbReference>
<dbReference type="EMBL" id="U00096">
    <property type="protein sequence ID" value="AAC74470.1"/>
    <property type="molecule type" value="Genomic_DNA"/>
</dbReference>
<dbReference type="EMBL" id="AP009048">
    <property type="protein sequence ID" value="BAE76423.1"/>
    <property type="molecule type" value="Genomic_DNA"/>
</dbReference>
<dbReference type="PIR" id="G64889">
    <property type="entry name" value="G64889"/>
</dbReference>
<dbReference type="RefSeq" id="NP_415906.1">
    <property type="nucleotide sequence ID" value="NC_000913.3"/>
</dbReference>
<dbReference type="RefSeq" id="WP_000191077.1">
    <property type="nucleotide sequence ID" value="NZ_SSZK01000012.1"/>
</dbReference>
<dbReference type="PDB" id="3PVR">
    <property type="method" value="X-ray"/>
    <property type="resolution" value="2.10 A"/>
    <property type="chains" value="A=2-309"/>
</dbReference>
<dbReference type="PDB" id="3PVT">
    <property type="method" value="X-ray"/>
    <property type="resolution" value="2.03 A"/>
    <property type="chains" value="A=2-309"/>
</dbReference>
<dbReference type="PDB" id="3PVY">
    <property type="method" value="X-ray"/>
    <property type="resolution" value="2.15 A"/>
    <property type="chains" value="A=2-309"/>
</dbReference>
<dbReference type="PDB" id="3PW1">
    <property type="method" value="X-ray"/>
    <property type="resolution" value="2.25 A"/>
    <property type="chains" value="A=2-309"/>
</dbReference>
<dbReference type="PDB" id="3PW8">
    <property type="method" value="X-ray"/>
    <property type="resolution" value="2.97 A"/>
    <property type="chains" value="C/D=2-309"/>
</dbReference>
<dbReference type="PDB" id="3PWQ">
    <property type="method" value="X-ray"/>
    <property type="resolution" value="2.65 A"/>
    <property type="chains" value="C/D/F/H=2-309"/>
</dbReference>
<dbReference type="PDB" id="4II4">
    <property type="method" value="X-ray"/>
    <property type="resolution" value="2.80 A"/>
    <property type="chains" value="A=2-309"/>
</dbReference>
<dbReference type="PDBsum" id="3PVR"/>
<dbReference type="PDBsum" id="3PVT"/>
<dbReference type="PDBsum" id="3PVY"/>
<dbReference type="PDBsum" id="3PW1"/>
<dbReference type="PDBsum" id="3PW8"/>
<dbReference type="PDBsum" id="3PWQ"/>
<dbReference type="PDBsum" id="4II4"/>
<dbReference type="SMR" id="P76077"/>
<dbReference type="BioGRID" id="4261392">
    <property type="interactions" value="124"/>
</dbReference>
<dbReference type="ComplexPortal" id="CPX-2844">
    <property type="entry name" value="paaABCE phenylacetyl-CoA monooxygenase complex"/>
</dbReference>
<dbReference type="FunCoup" id="P76077">
    <property type="interactions" value="99"/>
</dbReference>
<dbReference type="IntAct" id="P76077">
    <property type="interactions" value="4"/>
</dbReference>
<dbReference type="STRING" id="511145.b1388"/>
<dbReference type="PaxDb" id="511145-b1388"/>
<dbReference type="DNASU" id="945833"/>
<dbReference type="EnsemblBacteria" id="AAC74470">
    <property type="protein sequence ID" value="AAC74470"/>
    <property type="gene ID" value="b1388"/>
</dbReference>
<dbReference type="GeneID" id="945833"/>
<dbReference type="KEGG" id="ecj:JW1383"/>
<dbReference type="KEGG" id="eco:b1388"/>
<dbReference type="KEGG" id="ecoc:C3026_08105"/>
<dbReference type="PATRIC" id="fig|1411691.4.peg.883"/>
<dbReference type="EchoBASE" id="EB3499"/>
<dbReference type="eggNOG" id="COG3396">
    <property type="taxonomic scope" value="Bacteria"/>
</dbReference>
<dbReference type="HOGENOM" id="CLU_879733_0_0_6"/>
<dbReference type="InParanoid" id="P76077"/>
<dbReference type="OMA" id="MQPEANW"/>
<dbReference type="OrthoDB" id="5292502at2"/>
<dbReference type="PhylomeDB" id="P76077"/>
<dbReference type="BioCyc" id="EcoCyc:G6709-MONOMER"/>
<dbReference type="BioCyc" id="MetaCyc:G6709-MONOMER"/>
<dbReference type="UniPathway" id="UPA00930"/>
<dbReference type="EvolutionaryTrace" id="P76077"/>
<dbReference type="PRO" id="PR:P76077"/>
<dbReference type="Proteomes" id="UP000000625">
    <property type="component" value="Chromosome"/>
</dbReference>
<dbReference type="GO" id="GO:0005829">
    <property type="term" value="C:cytosol"/>
    <property type="evidence" value="ECO:0000318"/>
    <property type="project" value="GO_Central"/>
</dbReference>
<dbReference type="GO" id="GO:0062077">
    <property type="term" value="C:phenylacetyl-CoA 1,2-epoxidase complex"/>
    <property type="evidence" value="ECO:0000353"/>
    <property type="project" value="ComplexPortal"/>
</dbReference>
<dbReference type="GO" id="GO:0097266">
    <property type="term" value="F:phenylacetyl-CoA 1,2-epoxidase activity"/>
    <property type="evidence" value="ECO:0007669"/>
    <property type="project" value="UniProtKB-EC"/>
</dbReference>
<dbReference type="GO" id="GO:0010124">
    <property type="term" value="P:phenylacetate catabolic process"/>
    <property type="evidence" value="ECO:0000314"/>
    <property type="project" value="ComplexPortal"/>
</dbReference>
<dbReference type="FunFam" id="1.20.1260.10:FF:000010">
    <property type="entry name" value="1,2-phenylacetyl-CoA epoxidase subunit A"/>
    <property type="match status" value="1"/>
</dbReference>
<dbReference type="Gene3D" id="1.20.1260.10">
    <property type="match status" value="1"/>
</dbReference>
<dbReference type="InterPro" id="IPR052703">
    <property type="entry name" value="Aromatic_CoA_ox/epox"/>
</dbReference>
<dbReference type="InterPro" id="IPR012347">
    <property type="entry name" value="Ferritin-like"/>
</dbReference>
<dbReference type="InterPro" id="IPR009078">
    <property type="entry name" value="Ferritin-like_SF"/>
</dbReference>
<dbReference type="InterPro" id="IPR011881">
    <property type="entry name" value="PaaA"/>
</dbReference>
<dbReference type="InterPro" id="IPR007814">
    <property type="entry name" value="PaaA_PaaC"/>
</dbReference>
<dbReference type="NCBIfam" id="TIGR02156">
    <property type="entry name" value="PA_CoA_Oxy1"/>
    <property type="match status" value="1"/>
</dbReference>
<dbReference type="PANTHER" id="PTHR30458:SF2">
    <property type="entry name" value="1,2-PHENYLACETYL-COA EPOXIDASE, SUBUNIT A"/>
    <property type="match status" value="1"/>
</dbReference>
<dbReference type="PANTHER" id="PTHR30458">
    <property type="entry name" value="PHENYLACETIC ACID DEGRADATION PROTEIN PAA"/>
    <property type="match status" value="1"/>
</dbReference>
<dbReference type="Pfam" id="PF05138">
    <property type="entry name" value="PaaA_PaaC"/>
    <property type="match status" value="1"/>
</dbReference>
<dbReference type="SUPFAM" id="SSF47240">
    <property type="entry name" value="Ferritin-like"/>
    <property type="match status" value="1"/>
</dbReference>
<reference key="1">
    <citation type="journal article" date="1998" name="J. Biol. Chem.">
        <title>Catabolism of phenylacetic acid in Escherichia coli. Characterization of a new aerobic hybrid pathway.</title>
        <authorList>
            <person name="Ferrandez A."/>
            <person name="Minambres B."/>
            <person name="Garcia B."/>
            <person name="Olivera E.R."/>
            <person name="Luengo J.M."/>
            <person name="Garcia J.L."/>
            <person name="Diaz E."/>
        </authorList>
    </citation>
    <scope>NUCLEOTIDE SEQUENCE [GENOMIC DNA]</scope>
    <scope>FUNCTION IN PHENYLACETATE CATABOLISM</scope>
    <scope>INDUCTION</scope>
    <source>
        <strain>W / ATCC 11105 / DSM 1900</strain>
    </source>
</reference>
<reference key="2">
    <citation type="journal article" date="1997" name="Science">
        <title>The complete genome sequence of Escherichia coli K-12.</title>
        <authorList>
            <person name="Blattner F.R."/>
            <person name="Plunkett G. III"/>
            <person name="Bloch C.A."/>
            <person name="Perna N.T."/>
            <person name="Burland V."/>
            <person name="Riley M."/>
            <person name="Collado-Vides J."/>
            <person name="Glasner J.D."/>
            <person name="Rode C.K."/>
            <person name="Mayhew G.F."/>
            <person name="Gregor J."/>
            <person name="Davis N.W."/>
            <person name="Kirkpatrick H.A."/>
            <person name="Goeden M.A."/>
            <person name="Rose D.J."/>
            <person name="Mau B."/>
            <person name="Shao Y."/>
        </authorList>
    </citation>
    <scope>NUCLEOTIDE SEQUENCE [LARGE SCALE GENOMIC DNA]</scope>
    <source>
        <strain>K12 / MG1655 / ATCC 47076</strain>
    </source>
</reference>
<reference key="3">
    <citation type="journal article" date="2006" name="Mol. Syst. Biol.">
        <title>Highly accurate genome sequences of Escherichia coli K-12 strains MG1655 and W3110.</title>
        <authorList>
            <person name="Hayashi K."/>
            <person name="Morooka N."/>
            <person name="Yamamoto Y."/>
            <person name="Fujita K."/>
            <person name="Isono K."/>
            <person name="Choi S."/>
            <person name="Ohtsubo E."/>
            <person name="Baba T."/>
            <person name="Wanner B.L."/>
            <person name="Mori H."/>
            <person name="Horiuchi T."/>
        </authorList>
    </citation>
    <scope>NUCLEOTIDE SEQUENCE [LARGE SCALE GENOMIC DNA]</scope>
    <source>
        <strain>K12 / W3110 / ATCC 27325 / DSM 5911</strain>
    </source>
</reference>
<reference key="4">
    <citation type="journal article" date="2000" name="J. Biol. Chem.">
        <title>Transcriptional regulation of the divergent paa catabolic operons for phenylacetic acid degradation in Escherichia coli.</title>
        <authorList>
            <person name="Ferrandez A."/>
            <person name="Garcia J.L."/>
            <person name="Diaz E."/>
        </authorList>
    </citation>
    <scope>TRANSCRIPTIONAL REGULATION</scope>
</reference>
<reference key="5">
    <citation type="journal article" date="2006" name="Appl. Environ. Microbiol.">
        <title>Genetic characterization of the phenylacetyl-coenzyme A oxygenase from the aerobic phenylacetic acid degradation pathway of Escherichia coli.</title>
        <authorList>
            <person name="Fernandez C."/>
            <person name="Ferrandez A."/>
            <person name="Minambres B."/>
            <person name="Diaz E."/>
            <person name="Garcia J.L."/>
        </authorList>
    </citation>
    <scope>FUNCTION AS A MONOOXYGENASE</scope>
</reference>
<reference key="6">
    <citation type="journal article" date="2010" name="Acta Crystallogr. F">
        <title>Crystallization and preliminary X-ray analysis of PaaAC, the main component of the hydroxylase of the Escherichia coli phenylacetyl-coenzyme A oxygenase complex.</title>
        <authorList>
            <person name="Grishin A.M."/>
            <person name="Ajamian E."/>
            <person name="Zhang L."/>
            <person name="Cygler M."/>
        </authorList>
    </citation>
    <scope>SUBUNIT</scope>
</reference>
<reference key="7">
    <citation type="journal article" date="2010" name="Proc. Natl. Acad. Sci. U.S.A.">
        <title>Bacterial phenylalanine and phenylacetate catabolic pathway revealed.</title>
        <authorList>
            <person name="Teufel R."/>
            <person name="Mascaraque V."/>
            <person name="Ismail W."/>
            <person name="Voss M."/>
            <person name="Perera J."/>
            <person name="Eisenreich W."/>
            <person name="Haehnel W."/>
            <person name="Fuchs G."/>
        </authorList>
    </citation>
    <scope>FUNCTION AS AN EPOXIDASE</scope>
    <scope>CATALYTIC ACTIVITY</scope>
</reference>
<reference key="8">
    <citation type="journal article" date="2011" name="J. Biol. Chem.">
        <title>Structural and functional studies of the Escherichia coli phenylacetyl-CoA monooxygenase complex.</title>
        <authorList>
            <person name="Grishin A.M."/>
            <person name="Ajamian E."/>
            <person name="Tao L."/>
            <person name="Zhang L."/>
            <person name="Menard R."/>
            <person name="Cygler M."/>
        </authorList>
    </citation>
    <scope>X-RAY CRYSTALLOGRAPHY (2.1 ANGSTROMS) OF 2-309 IN COMPLEX WITH SUBSTRATE ANALOGS</scope>
    <scope>FUNCTION AS A MONOOXYGENASE</scope>
    <scope>COFACTOR</scope>
    <scope>SUBUNIT</scope>
</reference>